<sequence length="334" mass="37209">MTEEKKINPPIFPFTAIVGQEEMKLALQLNVIDPKIGGVMIMGDRGTGKSTTIRAIADLLPEIEVVKDNQFNTAPSEDLNEEIVKIKTPMIDLPLGATEDRVCGTIDIEKALTDGVKAFEPGLLAKANRGILYVDEVNLLDDHLVDILLDSAASGLNTVEREGISIRHAARFVLVGSGNPEEGELRPQLLDRFGMHAVIKTVKDPKLRVRVVEERTLFDLNPEEWINKYREQQEALKTRIIAAQNLISSVTISDDFKLKISQVCSELDVDGLRGDIVTNRAAKAYAAFNNRTEVEIGDIEKVITLCLRHRLRKDPLETIDSGDKVQKLFEEIFD</sequence>
<comment type="function">
    <text>Involved in chlorophyll biosynthesis; introduces a magnesium ion into protoporphyrin IX to yield Mg-protoporphyrin IX.</text>
</comment>
<comment type="catalytic activity">
    <reaction>
        <text>protoporphyrin IX + Mg(2+) + ATP + H2O = Mg-protoporphyrin IX + ADP + phosphate + 3 H(+)</text>
        <dbReference type="Rhea" id="RHEA:13961"/>
        <dbReference type="ChEBI" id="CHEBI:15377"/>
        <dbReference type="ChEBI" id="CHEBI:15378"/>
        <dbReference type="ChEBI" id="CHEBI:18420"/>
        <dbReference type="ChEBI" id="CHEBI:30616"/>
        <dbReference type="ChEBI" id="CHEBI:43474"/>
        <dbReference type="ChEBI" id="CHEBI:57306"/>
        <dbReference type="ChEBI" id="CHEBI:60492"/>
        <dbReference type="ChEBI" id="CHEBI:456216"/>
        <dbReference type="EC" id="6.6.1.1"/>
    </reaction>
</comment>
<comment type="pathway">
    <text>Porphyrin-containing compound metabolism; chlorophyll biosynthesis.</text>
</comment>
<comment type="subcellular location">
    <subcellularLocation>
        <location>Plastid</location>
        <location>Chloroplast</location>
    </subcellularLocation>
</comment>
<comment type="similarity">
    <text evidence="2">Belongs to the Mg-chelatase subunits D/I family.</text>
</comment>
<gene>
    <name type="primary">chlI</name>
    <name type="synonym">ccsA</name>
</gene>
<evidence type="ECO:0000255" key="1"/>
<evidence type="ECO:0000305" key="2"/>
<feature type="chain" id="PRO_0000206872" description="Magnesium-chelatase subunit ChlI">
    <location>
        <begin position="1"/>
        <end position="334"/>
    </location>
</feature>
<feature type="binding site" evidence="1">
    <location>
        <begin position="43"/>
        <end position="50"/>
    </location>
    <ligand>
        <name>ATP</name>
        <dbReference type="ChEBI" id="CHEBI:30616"/>
    </ligand>
</feature>
<dbReference type="EC" id="6.6.1.1"/>
<dbReference type="EMBL" id="Z21959">
    <property type="protein sequence ID" value="CAA79971.1"/>
    <property type="molecule type" value="Genomic_DNA"/>
</dbReference>
<dbReference type="PIR" id="S32166">
    <property type="entry name" value="S32166"/>
</dbReference>
<dbReference type="SMR" id="Q32742"/>
<dbReference type="UniPathway" id="UPA00668"/>
<dbReference type="GO" id="GO:0009507">
    <property type="term" value="C:chloroplast"/>
    <property type="evidence" value="ECO:0007669"/>
    <property type="project" value="UniProtKB-SubCell"/>
</dbReference>
<dbReference type="GO" id="GO:0005524">
    <property type="term" value="F:ATP binding"/>
    <property type="evidence" value="ECO:0007669"/>
    <property type="project" value="UniProtKB-KW"/>
</dbReference>
<dbReference type="GO" id="GO:0016887">
    <property type="term" value="F:ATP hydrolysis activity"/>
    <property type="evidence" value="ECO:0007669"/>
    <property type="project" value="InterPro"/>
</dbReference>
<dbReference type="GO" id="GO:0016851">
    <property type="term" value="F:magnesium chelatase activity"/>
    <property type="evidence" value="ECO:0007669"/>
    <property type="project" value="UniProtKB-EC"/>
</dbReference>
<dbReference type="GO" id="GO:0015995">
    <property type="term" value="P:chlorophyll biosynthetic process"/>
    <property type="evidence" value="ECO:0007669"/>
    <property type="project" value="UniProtKB-UniPathway"/>
</dbReference>
<dbReference type="GO" id="GO:0015979">
    <property type="term" value="P:photosynthesis"/>
    <property type="evidence" value="ECO:0007669"/>
    <property type="project" value="UniProtKB-KW"/>
</dbReference>
<dbReference type="CDD" id="cd00009">
    <property type="entry name" value="AAA"/>
    <property type="match status" value="1"/>
</dbReference>
<dbReference type="FunFam" id="3.40.50.300:FF:000601">
    <property type="entry name" value="Mg-protoporphyrin IX chelatase"/>
    <property type="match status" value="1"/>
</dbReference>
<dbReference type="Gene3D" id="1.10.8.80">
    <property type="entry name" value="Magnesium chelatase subunit I, C-Terminal domain"/>
    <property type="match status" value="1"/>
</dbReference>
<dbReference type="Gene3D" id="3.40.50.300">
    <property type="entry name" value="P-loop containing nucleotide triphosphate hydrolases"/>
    <property type="match status" value="1"/>
</dbReference>
<dbReference type="InterPro" id="IPR003593">
    <property type="entry name" value="AAA+_ATPase"/>
</dbReference>
<dbReference type="InterPro" id="IPR045006">
    <property type="entry name" value="CHLI-like"/>
</dbReference>
<dbReference type="InterPro" id="IPR041628">
    <property type="entry name" value="ChlI/MoxR_AAA_lid"/>
</dbReference>
<dbReference type="InterPro" id="IPR011775">
    <property type="entry name" value="Mg_chelatase_ATPase-isu"/>
</dbReference>
<dbReference type="InterPro" id="IPR000523">
    <property type="entry name" value="Mg_chelatse_chII-like_cat_dom"/>
</dbReference>
<dbReference type="InterPro" id="IPR027417">
    <property type="entry name" value="P-loop_NTPase"/>
</dbReference>
<dbReference type="NCBIfam" id="TIGR02030">
    <property type="entry name" value="BchI-ChlI"/>
    <property type="match status" value="1"/>
</dbReference>
<dbReference type="PANTHER" id="PTHR32039">
    <property type="entry name" value="MAGNESIUM-CHELATASE SUBUNIT CHLI"/>
    <property type="match status" value="1"/>
</dbReference>
<dbReference type="PANTHER" id="PTHR32039:SF9">
    <property type="entry name" value="MAGNESIUM-CHELATASE SUBUNIT CHLI-2, CHLOROPLASTIC"/>
    <property type="match status" value="1"/>
</dbReference>
<dbReference type="Pfam" id="PF17863">
    <property type="entry name" value="AAA_lid_2"/>
    <property type="match status" value="1"/>
</dbReference>
<dbReference type="Pfam" id="PF01078">
    <property type="entry name" value="Mg_chelatase"/>
    <property type="match status" value="1"/>
</dbReference>
<dbReference type="SMART" id="SM00382">
    <property type="entry name" value="AAA"/>
    <property type="match status" value="1"/>
</dbReference>
<dbReference type="SUPFAM" id="SSF52540">
    <property type="entry name" value="P-loop containing nucleoside triphosphate hydrolases"/>
    <property type="match status" value="1"/>
</dbReference>
<keyword id="KW-0067">ATP-binding</keyword>
<keyword id="KW-0149">Chlorophyll biosynthesis</keyword>
<keyword id="KW-0150">Chloroplast</keyword>
<keyword id="KW-0436">Ligase</keyword>
<keyword id="KW-0547">Nucleotide-binding</keyword>
<keyword id="KW-0602">Photosynthesis</keyword>
<keyword id="KW-0934">Plastid</keyword>
<reference key="1">
    <citation type="submission" date="1993-03" db="EMBL/GenBank/DDBJ databases">
        <title>bchI is encoded in a constitutively expressed dicistronic operon on the plastid DNA of Olisthodiscus luteus (Chromophyta).</title>
        <authorList>
            <person name="Valentin K.-U."/>
            <person name="Darby C."/>
            <person name="Cattolico R.A."/>
        </authorList>
    </citation>
    <scope>NUCLEOTIDE SEQUENCE [GENOMIC DNA]</scope>
</reference>
<protein>
    <recommendedName>
        <fullName>Magnesium-chelatase subunit ChlI</fullName>
        <ecNumber>6.6.1.1</ecNumber>
    </recommendedName>
    <alternativeName>
        <fullName>Mg-protoporphyrin IX chelatase</fullName>
    </alternativeName>
</protein>
<geneLocation type="chloroplast"/>
<organism>
    <name type="scientific">Olisthodiscus luteus</name>
    <name type="common">Marine phytoflagellate</name>
    <dbReference type="NCBI Taxonomy" id="83000"/>
    <lineage>
        <taxon>Eukaryota</taxon>
        <taxon>Sar</taxon>
        <taxon>Stramenopiles</taxon>
        <taxon>Ochrophyta</taxon>
        <taxon>Olisthodiscophyceae</taxon>
        <taxon>Olisthodiscaceae</taxon>
        <taxon>Olisthodiscus</taxon>
    </lineage>
</organism>
<accession>Q32742</accession>
<name>CHLI_OLILU</name>
<proteinExistence type="inferred from homology"/>